<organismHost>
    <name type="scientific">Cynomys gunnisoni</name>
    <name type="common">Gunnison's prairie dog</name>
    <name type="synonym">Spermophilus gunnisoni</name>
    <dbReference type="NCBI Taxonomy" id="45479"/>
</organismHost>
<organismHost>
    <name type="scientific">Cynomys leucurus</name>
    <name type="common">White-tailed prairie dog</name>
    <dbReference type="NCBI Taxonomy" id="99825"/>
</organismHost>
<organismHost>
    <name type="scientific">Cynomys ludovicianus</name>
    <name type="common">Black-tailed prairie dog</name>
    <dbReference type="NCBI Taxonomy" id="45480"/>
</organismHost>
<organismHost>
    <name type="scientific">Cynomys mexicanus</name>
    <name type="common">Mexican prairie dog</name>
    <dbReference type="NCBI Taxonomy" id="99826"/>
</organismHost>
<organismHost>
    <name type="scientific">Cynomys parvidens</name>
    <name type="common">Utah prairie dog</name>
    <dbReference type="NCBI Taxonomy" id="99827"/>
</organismHost>
<organismHost>
    <name type="scientific">Gliridae</name>
    <name type="common">dormice</name>
    <dbReference type="NCBI Taxonomy" id="30650"/>
</organismHost>
<organismHost>
    <name type="scientific">Heliosciurus ruwenzorii</name>
    <name type="common">Ruwenzori sun squirrel</name>
    <dbReference type="NCBI Taxonomy" id="226685"/>
</organismHost>
<organismHost>
    <name type="scientific">Homo sapiens</name>
    <name type="common">Human</name>
    <dbReference type="NCBI Taxonomy" id="9606"/>
</organismHost>
<organismHost>
    <name type="scientific">Mus musculus</name>
    <name type="common">Mouse</name>
    <dbReference type="NCBI Taxonomy" id="10090"/>
</organismHost>
<evidence type="ECO:0000255" key="1">
    <source>
        <dbReference type="HAMAP-Rule" id="MF_04143"/>
    </source>
</evidence>
<evidence type="ECO:0007829" key="2">
    <source>
        <dbReference type="PDB" id="8ORV"/>
    </source>
</evidence>
<protein>
    <recommendedName>
        <fullName evidence="1">Poxin-Schlafen</fullName>
    </recommendedName>
</protein>
<gene>
    <name type="primary">OPG188</name>
    <name type="ORF">MPXVgp165</name>
</gene>
<proteinExistence type="evidence at protein level"/>
<sequence length="503" mass="57272">MFYAHAFGGYDENLHAFPGISSTVANDVRKYSVVSVYNKKYNIVKNKYMWCNSQVNKRYIGALLPMFECNEYLQIGDPIHDLEGNQISIVTYRHKNYYALSGIGYESLDLCLEGVGIHHHVLETGNAVYGKVQHEYSTIKEKAKEMNALKPGPIIDYHVWIGDCVCQVTTVDVHGKEIMRMRFKRGAVLPIPNLVKVKVGEENDTINLSTSISALLNSGGGTIEVTSKEERVDYVLMKRLESIHHLWSVVYDHLNVVNGEERCYVHMHSSHQSPMLSTVKTNLYMKTMGACLQMDSMEALEYLSELKESGGRSPRPELQKFEYPDGVKDTESIERLAEEFFNRSELQAGESVKFGNSINVKHTSVSAKQLRTRIRQQLPSILSSFANTKGGYLFIGVDNNTHKVIGFTVGHDYLKLVESDIEKYIQKLPVVHFCKKKEDIKYACRFIKVYKPGDETTSTYVCAIKVERCCCAVFADWPESWYMDTSGSMKKYSPDEWVSHIKF</sequence>
<feature type="chain" id="PRO_0000457612" description="Poxin-Schlafen">
    <location>
        <begin position="1"/>
        <end position="503"/>
    </location>
</feature>
<feature type="active site" description="Proton donor" evidence="1">
    <location>
        <position position="15"/>
    </location>
</feature>
<feature type="active site" description="Shared with catalytic histidine of dimeric partner" evidence="1">
    <location>
        <position position="136"/>
    </location>
</feature>
<feature type="active site" description="Proton acceptor; shared with catalytic histidine of dimeric partner" evidence="1">
    <location>
        <position position="140"/>
    </location>
</feature>
<feature type="site" description="Substrate binding" evidence="1">
    <location>
        <position position="58"/>
    </location>
</feature>
<feature type="site" description="Substrate binding" evidence="1">
    <location>
        <position position="103"/>
    </location>
</feature>
<feature type="site" description="Substrate binding" evidence="1">
    <location>
        <position position="147"/>
    </location>
</feature>
<feature type="site" description="Substrate binding" evidence="1">
    <location>
        <position position="167"/>
    </location>
</feature>
<feature type="site" description="Substrate binding" evidence="1">
    <location>
        <position position="180"/>
    </location>
</feature>
<feature type="site" description="Substrate binding" evidence="1">
    <location>
        <position position="182"/>
    </location>
</feature>
<feature type="site" description="Substrate binding" evidence="1">
    <location>
        <position position="184"/>
    </location>
</feature>
<feature type="strand" evidence="2">
    <location>
        <begin position="2"/>
        <end position="4"/>
    </location>
</feature>
<feature type="helix" evidence="2">
    <location>
        <begin position="5"/>
        <end position="7"/>
    </location>
</feature>
<feature type="strand" evidence="2">
    <location>
        <begin position="14"/>
        <end position="17"/>
    </location>
</feature>
<feature type="strand" evidence="2">
    <location>
        <begin position="20"/>
        <end position="24"/>
    </location>
</feature>
<feature type="helix" evidence="2">
    <location>
        <begin position="28"/>
        <end position="30"/>
    </location>
</feature>
<feature type="strand" evidence="2">
    <location>
        <begin position="32"/>
        <end position="36"/>
    </location>
</feature>
<feature type="strand" evidence="2">
    <location>
        <begin position="39"/>
        <end position="43"/>
    </location>
</feature>
<feature type="strand" evidence="2">
    <location>
        <begin position="48"/>
        <end position="55"/>
    </location>
</feature>
<feature type="strand" evidence="2">
    <location>
        <begin position="58"/>
        <end position="64"/>
    </location>
</feature>
<feature type="strand" evidence="2">
    <location>
        <begin position="66"/>
        <end position="68"/>
    </location>
</feature>
<feature type="strand" evidence="2">
    <location>
        <begin position="78"/>
        <end position="80"/>
    </location>
</feature>
<feature type="strand" evidence="2">
    <location>
        <begin position="86"/>
        <end position="89"/>
    </location>
</feature>
<feature type="strand" evidence="2">
    <location>
        <begin position="97"/>
        <end position="99"/>
    </location>
</feature>
<feature type="strand" evidence="2">
    <location>
        <begin position="105"/>
        <end position="111"/>
    </location>
</feature>
<feature type="strand" evidence="2">
    <location>
        <begin position="116"/>
        <end position="121"/>
    </location>
</feature>
<feature type="strand" evidence="2">
    <location>
        <begin position="127"/>
        <end position="129"/>
    </location>
</feature>
<feature type="strand" evidence="2">
    <location>
        <begin position="132"/>
        <end position="134"/>
    </location>
</feature>
<feature type="helix" evidence="2">
    <location>
        <begin position="136"/>
        <end position="146"/>
    </location>
</feature>
<feature type="strand" evidence="2">
    <location>
        <begin position="156"/>
        <end position="161"/>
    </location>
</feature>
<feature type="strand" evidence="2">
    <location>
        <begin position="166"/>
        <end position="171"/>
    </location>
</feature>
<feature type="strand" evidence="2">
    <location>
        <begin position="177"/>
        <end position="183"/>
    </location>
</feature>
<reference key="1">
    <citation type="journal article" date="2022" name="J. Infect. Dis.">
        <title>Exportation of Monkeypox virus from the African continent.</title>
        <authorList>
            <person name="Mauldin M.R."/>
            <person name="McCollum A.M."/>
            <person name="Nakazawa Y.J."/>
            <person name="Mandra A."/>
            <person name="Whitehouse E.R."/>
            <person name="Davidson W."/>
            <person name="Zhao H."/>
            <person name="Gao J."/>
            <person name="Li Y."/>
            <person name="Doty J."/>
            <person name="Yinka-Ogunleye A."/>
            <person name="Akinpelu A."/>
            <person name="Aruna O."/>
            <person name="Naidoo D."/>
            <person name="Lewandowski K."/>
            <person name="Afrough B."/>
            <person name="Graham V."/>
            <person name="Aarons E."/>
            <person name="Hewson R."/>
            <person name="Vipond R."/>
            <person name="Dunning J."/>
            <person name="Chand M."/>
            <person name="Brown C."/>
            <person name="Cohen-Gihon I."/>
            <person name="Erez N."/>
            <person name="Shifman O."/>
            <person name="Israeli O."/>
            <person name="Sharon M."/>
            <person name="Schwartz E."/>
            <person name="Beth-Din A."/>
            <person name="Zvi A."/>
            <person name="Mak T.M."/>
            <person name="Ng Y.K."/>
            <person name="Cui L."/>
            <person name="Lin R.T.P."/>
            <person name="Olson V.A."/>
            <person name="Brooks T."/>
            <person name="Paran N."/>
            <person name="Ihekweazu C."/>
            <person name="Reynolds M.G."/>
        </authorList>
    </citation>
    <scope>NUCLEOTIDE SEQUENCE [LARGE SCALE GENOMIC DNA]</scope>
    <source>
        <strain>MPXV-M5312_HM12_Rivers</strain>
    </source>
</reference>
<accession>A0A7H0DNF0</accession>
<keyword id="KW-0002">3D-structure</keyword>
<keyword id="KW-0244">Early protein</keyword>
<keyword id="KW-0378">Hydrolase</keyword>
<keyword id="KW-0540">Nuclease</keyword>
<keyword id="KW-1185">Reference proteome</keyword>
<comment type="function">
    <text evidence="1">Nuclease that is responsible for viral evasion of host cGAS-STING innate immunity. Cleaves 2',3'-cGAMP which is produced by host cGAS following recognition of cytosolic DNA and blocks the subsequent 2',3'-cGAMP-mediated activation of TMEM173/STING, which normally spreads to adjacent cells and activates the interferon and NF-kappa-B immune responses.</text>
</comment>
<comment type="catalytic activity">
    <reaction evidence="1">
        <text>2',3'-cGAMP + H2O = Gp(2'-5')Ap(3') + H(+)</text>
        <dbReference type="Rhea" id="RHEA:59472"/>
        <dbReference type="ChEBI" id="CHEBI:15377"/>
        <dbReference type="ChEBI" id="CHEBI:15378"/>
        <dbReference type="ChEBI" id="CHEBI:143093"/>
        <dbReference type="ChEBI" id="CHEBI:143098"/>
    </reaction>
    <physiologicalReaction direction="left-to-right" evidence="1">
        <dbReference type="Rhea" id="RHEA:59473"/>
    </physiologicalReaction>
</comment>
<comment type="subunit">
    <text evidence="1">Homodimer.</text>
</comment>
<comment type="induction">
    <text>Expressed in the early phase of the viral replicative cycle.</text>
</comment>
<comment type="domain">
    <text evidence="1">The substrate binding site is formed by the N-terminus of a monomer and the C-terminus of the opposite monomer.</text>
</comment>
<comment type="similarity">
    <text evidence="1">In the N-terminal section; belongs to the poxin family.</text>
</comment>
<comment type="similarity">
    <text evidence="1">In the C-terminal section; belongs to the Schlafen protein family. Subgroup poxviridae B3 subfamily.</text>
</comment>
<dbReference type="EMBL" id="MT903340">
    <property type="protein sequence ID" value="QNP13033.1"/>
    <property type="molecule type" value="Genomic_DNA"/>
</dbReference>
<dbReference type="RefSeq" id="YP_010377160.1">
    <property type="nucleotide sequence ID" value="NC_063383.1"/>
</dbReference>
<dbReference type="PDB" id="8C9K">
    <property type="method" value="X-ray"/>
    <property type="resolution" value="1.72 A"/>
    <property type="chains" value="A/B/C/D=1-195"/>
</dbReference>
<dbReference type="PDB" id="8ORV">
    <property type="method" value="X-ray"/>
    <property type="resolution" value="1.65 A"/>
    <property type="chains" value="A=1-195"/>
</dbReference>
<dbReference type="PDB" id="8P44">
    <property type="method" value="X-ray"/>
    <property type="resolution" value="1.93 A"/>
    <property type="chains" value="A/B/C/D=1-195"/>
</dbReference>
<dbReference type="PDBsum" id="8C9K"/>
<dbReference type="PDBsum" id="8ORV"/>
<dbReference type="PDBsum" id="8P44"/>
<dbReference type="SMR" id="A0A7H0DNF0"/>
<dbReference type="GeneID" id="72551574"/>
<dbReference type="Proteomes" id="UP000516359">
    <property type="component" value="Genome"/>
</dbReference>
<dbReference type="GO" id="GO:0061507">
    <property type="term" value="F:2',3'-cyclic GMP-AMP binding"/>
    <property type="evidence" value="ECO:0007669"/>
    <property type="project" value="UniProtKB-UniRule"/>
</dbReference>
<dbReference type="GO" id="GO:0004518">
    <property type="term" value="F:nuclease activity"/>
    <property type="evidence" value="ECO:0007669"/>
    <property type="project" value="UniProtKB-UniRule"/>
</dbReference>
<dbReference type="GO" id="GO:0052170">
    <property type="term" value="P:symbiont-mediated suppression of host innate immune response"/>
    <property type="evidence" value="ECO:0007669"/>
    <property type="project" value="UniProtKB-UniRule"/>
</dbReference>
<dbReference type="Gene3D" id="3.30.950.30">
    <property type="entry name" value="Schlafen, AAA domain"/>
    <property type="match status" value="1"/>
</dbReference>
<dbReference type="HAMAP" id="MF_04143">
    <property type="entry name" value="Poxins"/>
    <property type="match status" value="1"/>
</dbReference>
<dbReference type="InterPro" id="IPR031450">
    <property type="entry name" value="Poxin-SLFN/SLFN_N"/>
</dbReference>
<dbReference type="InterPro" id="IPR006853">
    <property type="entry name" value="Poxin_vir"/>
</dbReference>
<dbReference type="InterPro" id="IPR029684">
    <property type="entry name" value="Schlafen"/>
</dbReference>
<dbReference type="InterPro" id="IPR007421">
    <property type="entry name" value="Schlafen_AlbA_2_dom"/>
</dbReference>
<dbReference type="InterPro" id="IPR038461">
    <property type="entry name" value="Schlafen_AlbA_2_dom_sf"/>
</dbReference>
<dbReference type="PANTHER" id="PTHR12155:SF2">
    <property type="entry name" value="RIBONUCLEASE SLFN12"/>
    <property type="match status" value="1"/>
</dbReference>
<dbReference type="PANTHER" id="PTHR12155">
    <property type="entry name" value="SCHLAFEN"/>
    <property type="match status" value="1"/>
</dbReference>
<dbReference type="Pfam" id="PF17057">
    <property type="entry name" value="B3R"/>
    <property type="match status" value="1"/>
</dbReference>
<dbReference type="Pfam" id="PF04326">
    <property type="entry name" value="SLFN_AlbA_2"/>
    <property type="match status" value="1"/>
</dbReference>
<organism>
    <name type="scientific">Monkeypox virus</name>
    <dbReference type="NCBI Taxonomy" id="10244"/>
    <lineage>
        <taxon>Viruses</taxon>
        <taxon>Varidnaviria</taxon>
        <taxon>Bamfordvirae</taxon>
        <taxon>Nucleocytoviricota</taxon>
        <taxon>Pokkesviricetes</taxon>
        <taxon>Chitovirales</taxon>
        <taxon>Poxviridae</taxon>
        <taxon>Chordopoxvirinae</taxon>
        <taxon>Orthopoxvirus</taxon>
    </lineage>
</organism>
<name>POXIN_MONPV</name>